<evidence type="ECO:0000255" key="1">
    <source>
        <dbReference type="HAMAP-Rule" id="MF_01452"/>
    </source>
</evidence>
<proteinExistence type="inferred from homology"/>
<comment type="function">
    <text evidence="1">The heterodimer acts as both an ATP-dependent DNA helicase and an ATP-dependent, dual-direction single-stranded exonuclease. Recognizes the chi site generating a DNA molecule suitable for the initiation of homologous recombination. The AddB subunit has 5' -&gt; 3' nuclease activity but not helicase activity.</text>
</comment>
<comment type="cofactor">
    <cofactor evidence="1">
        <name>Mg(2+)</name>
        <dbReference type="ChEBI" id="CHEBI:18420"/>
    </cofactor>
</comment>
<comment type="cofactor">
    <cofactor evidence="1">
        <name>[4Fe-4S] cluster</name>
        <dbReference type="ChEBI" id="CHEBI:49883"/>
    </cofactor>
    <text evidence="1">Binds 1 [4Fe-4S] cluster.</text>
</comment>
<comment type="subunit">
    <text evidence="1">Heterodimer of AddA and AddB.</text>
</comment>
<comment type="miscellaneous">
    <text evidence="1">Despite having conserved helicase domains, this subunit does not have helicase activity.</text>
</comment>
<comment type="similarity">
    <text evidence="1">Belongs to the helicase family. AddB/RexB type 1 subfamily.</text>
</comment>
<keyword id="KW-0004">4Fe-4S</keyword>
<keyword id="KW-0067">ATP-binding</keyword>
<keyword id="KW-0227">DNA damage</keyword>
<keyword id="KW-0234">DNA repair</keyword>
<keyword id="KW-0238">DNA-binding</keyword>
<keyword id="KW-0269">Exonuclease</keyword>
<keyword id="KW-0347">Helicase</keyword>
<keyword id="KW-0378">Hydrolase</keyword>
<keyword id="KW-0408">Iron</keyword>
<keyword id="KW-0411">Iron-sulfur</keyword>
<keyword id="KW-0479">Metal-binding</keyword>
<keyword id="KW-0540">Nuclease</keyword>
<keyword id="KW-0547">Nucleotide-binding</keyword>
<accession>B7HZR4</accession>
<dbReference type="EC" id="3.1.-.-" evidence="1"/>
<dbReference type="EMBL" id="CP001177">
    <property type="protein sequence ID" value="ACJ78524.1"/>
    <property type="molecule type" value="Genomic_DNA"/>
</dbReference>
<dbReference type="SMR" id="B7HZR4"/>
<dbReference type="KEGG" id="bcr:BCAH187_A1296"/>
<dbReference type="HOGENOM" id="CLU_007838_0_0_9"/>
<dbReference type="Proteomes" id="UP000002214">
    <property type="component" value="Chromosome"/>
</dbReference>
<dbReference type="GO" id="GO:0051539">
    <property type="term" value="F:4 iron, 4 sulfur cluster binding"/>
    <property type="evidence" value="ECO:0007669"/>
    <property type="project" value="UniProtKB-KW"/>
</dbReference>
<dbReference type="GO" id="GO:0008409">
    <property type="term" value="F:5'-3' exonuclease activity"/>
    <property type="evidence" value="ECO:0007669"/>
    <property type="project" value="UniProtKB-UniRule"/>
</dbReference>
<dbReference type="GO" id="GO:0005524">
    <property type="term" value="F:ATP binding"/>
    <property type="evidence" value="ECO:0007669"/>
    <property type="project" value="UniProtKB-UniRule"/>
</dbReference>
<dbReference type="GO" id="GO:0003690">
    <property type="term" value="F:double-stranded DNA binding"/>
    <property type="evidence" value="ECO:0007669"/>
    <property type="project" value="UniProtKB-UniRule"/>
</dbReference>
<dbReference type="GO" id="GO:0004386">
    <property type="term" value="F:helicase activity"/>
    <property type="evidence" value="ECO:0007669"/>
    <property type="project" value="UniProtKB-KW"/>
</dbReference>
<dbReference type="GO" id="GO:0046872">
    <property type="term" value="F:metal ion binding"/>
    <property type="evidence" value="ECO:0007669"/>
    <property type="project" value="UniProtKB-KW"/>
</dbReference>
<dbReference type="GO" id="GO:0000724">
    <property type="term" value="P:double-strand break repair via homologous recombination"/>
    <property type="evidence" value="ECO:0007669"/>
    <property type="project" value="UniProtKB-UniRule"/>
</dbReference>
<dbReference type="FunFam" id="3.40.50.300:FF:001679">
    <property type="entry name" value="ATP-dependent helicase/deoxyribonuclease subunit B"/>
    <property type="match status" value="1"/>
</dbReference>
<dbReference type="FunFam" id="3.40.50.300:FF:001704">
    <property type="entry name" value="ATP-dependent helicase/deoxyribonuclease subunit B"/>
    <property type="match status" value="1"/>
</dbReference>
<dbReference type="FunFam" id="3.40.50.300:FF:001705">
    <property type="entry name" value="ATP-dependent helicase/deoxyribonuclease subunit B"/>
    <property type="match status" value="1"/>
</dbReference>
<dbReference type="FunFam" id="3.40.50.300:FF:001739">
    <property type="entry name" value="ATP-dependent helicase/deoxyribonuclease subunit B"/>
    <property type="match status" value="1"/>
</dbReference>
<dbReference type="FunFam" id="3.90.320.10:FF:000006">
    <property type="entry name" value="ATP-dependent helicase/deoxyribonuclease subunit B"/>
    <property type="match status" value="1"/>
</dbReference>
<dbReference type="Gene3D" id="3.90.320.10">
    <property type="match status" value="1"/>
</dbReference>
<dbReference type="Gene3D" id="6.10.140.1030">
    <property type="match status" value="1"/>
</dbReference>
<dbReference type="Gene3D" id="3.40.50.300">
    <property type="entry name" value="P-loop containing nucleotide triphosphate hydrolases"/>
    <property type="match status" value="4"/>
</dbReference>
<dbReference type="HAMAP" id="MF_01452">
    <property type="entry name" value="AddB_type1"/>
    <property type="match status" value="1"/>
</dbReference>
<dbReference type="InterPro" id="IPR049035">
    <property type="entry name" value="ADDB_N"/>
</dbReference>
<dbReference type="InterPro" id="IPR014140">
    <property type="entry name" value="DNA_helicase_suAddB"/>
</dbReference>
<dbReference type="InterPro" id="IPR014017">
    <property type="entry name" value="DNA_helicase_UvrD-like_C"/>
</dbReference>
<dbReference type="InterPro" id="IPR027417">
    <property type="entry name" value="P-loop_NTPase"/>
</dbReference>
<dbReference type="InterPro" id="IPR011604">
    <property type="entry name" value="PDDEXK-like_dom_sf"/>
</dbReference>
<dbReference type="InterPro" id="IPR038726">
    <property type="entry name" value="PDDEXK_AddAB-type"/>
</dbReference>
<dbReference type="NCBIfam" id="TIGR02773">
    <property type="entry name" value="addB_Gpos"/>
    <property type="match status" value="1"/>
</dbReference>
<dbReference type="PANTHER" id="PTHR30591">
    <property type="entry name" value="RECBCD ENZYME SUBUNIT RECC"/>
    <property type="match status" value="1"/>
</dbReference>
<dbReference type="PANTHER" id="PTHR30591:SF1">
    <property type="entry name" value="RECBCD ENZYME SUBUNIT RECC"/>
    <property type="match status" value="1"/>
</dbReference>
<dbReference type="Pfam" id="PF21445">
    <property type="entry name" value="ADDB_N"/>
    <property type="match status" value="1"/>
</dbReference>
<dbReference type="Pfam" id="PF12705">
    <property type="entry name" value="PDDEXK_1"/>
    <property type="match status" value="1"/>
</dbReference>
<dbReference type="Pfam" id="PF13361">
    <property type="entry name" value="UvrD_C"/>
    <property type="match status" value="1"/>
</dbReference>
<dbReference type="SUPFAM" id="SSF52540">
    <property type="entry name" value="P-loop containing nucleoside triphosphate hydrolases"/>
    <property type="match status" value="2"/>
</dbReference>
<dbReference type="PROSITE" id="PS51198">
    <property type="entry name" value="UVRD_HELICASE_ATP_BIND"/>
    <property type="match status" value="1"/>
</dbReference>
<dbReference type="PROSITE" id="PS51217">
    <property type="entry name" value="UVRD_HELICASE_CTER"/>
    <property type="match status" value="1"/>
</dbReference>
<protein>
    <recommendedName>
        <fullName evidence="1">ATP-dependent helicase/deoxyribonuclease subunit B</fullName>
        <ecNumber evidence="1">3.1.-.-</ecNumber>
    </recommendedName>
    <alternativeName>
        <fullName evidence="1">ATP-dependent helicase/nuclease subunit AddB</fullName>
    </alternativeName>
</protein>
<organism>
    <name type="scientific">Bacillus cereus (strain AH187)</name>
    <dbReference type="NCBI Taxonomy" id="405534"/>
    <lineage>
        <taxon>Bacteria</taxon>
        <taxon>Bacillati</taxon>
        <taxon>Bacillota</taxon>
        <taxon>Bacilli</taxon>
        <taxon>Bacillales</taxon>
        <taxon>Bacillaceae</taxon>
        <taxon>Bacillus</taxon>
        <taxon>Bacillus cereus group</taxon>
    </lineage>
</organism>
<sequence>MSLRFVIGRAGSGKSTLCLHEVQEELKQRPRGETILYLVPEQMTFQTQQALIGSEDVRGSIRAQVFSFSRLAWKVLQEVGGASRLHIDEAGVHMLLRKIVESRKDGLSVFQKAAEQNGFFEHLGSMIAEFKRYNVTPSNVYEMWQQLDAHSSSAEQKLLANKVYDLQLLYDDFERALIGKYLDSEDYLQLLVEKLPQSEYVKGAEIYIDGFHSFSPQELEIVRQLMICGARVTITLTIDEKTLAQPVNELDLFYETTLTYEKIKQVAREEKIEIEKTIPLMEQPRFHSPALAHLEAHYEARPNEKFNGEASVTIHTAANLRAEVEGVAREIRRLVADENYRYRDIAVLLRNGESYYDVMRTLFTDYNIPHFIDEKRPMSHHPLVECIRSALEIISGNWRYDAVFRCVKTELLYPLDVRKETMREEMDEFENYCLAYGVQGKRWTSEDPWMYRRYRSLDDTDGMITDSEREMEEKINRLRGVVRTPVIRMQKRLKRAGTVMQMCEAVYLFLEELDVPKKLEALRIRAEESGDFLFATDHEQVWEEVMSLLDTFVEMLGEEKMSLSMFTDVMSTGLEALQFANIPPSLDQVLIANIDRSRLSNVKATFVIGVNEGVIPAAPMDEGMLSDEERDVLSAAGIELAPTTRQTLLEEQFVMYQMVTRATEKLYISCPLADEEGKTLLASSFIKKIKRMFPDVKDTFITNDVNDLSRSEQISYVATPEVTLSYVMQQLQTWKRYGFEGNLDFWWDVYNFYVTSDEWKQKSSRVLSSLFYRNRAQKLSTAVSRDLYGDKIKGSVSRMELFNRCAYAHFAQHGLSLRERDIFKLDAPDIGELFHAALKRIADRLLRENRTWADLSIKECEHLSAVVIEEIAPLLQRQILLSSNRHFYLKQKLQQIIFRTSIILREHAKSSGFVPVDLEVPFGMGGTGSLPPMEFSLPNGVKMEVVGRIDRVDKAEDENGTFLRIIDYKSSSKALDLTEVYYGLALQMLTYLDVVTSNAHTWMKKGGTASPAGVLYFHIHNPIVEVKGDASEAEIEKEILKKFKMKGLVLGDADVVRLMDNKLSTGSSDIISAGLKKDGSFSARSSIASEQEFNVLQKYVHHTFENIGKDITEGVIDIAPYKKGNKAACTFCNFKSVCQFDESLEDNQFRTLKDMKDSEAMEKIREEVGGE</sequence>
<gene>
    <name evidence="1" type="primary">addB</name>
    <name type="ordered locus">BCAH187_A1296</name>
</gene>
<name>ADDB_BACC7</name>
<feature type="chain" id="PRO_0000379153" description="ATP-dependent helicase/deoxyribonuclease subunit B">
    <location>
        <begin position="1"/>
        <end position="1171"/>
    </location>
</feature>
<feature type="domain" description="UvrD-like helicase ATP-binding" evidence="1">
    <location>
        <begin position="1"/>
        <end position="343"/>
    </location>
</feature>
<feature type="domain" description="UvrD-like helicase C-terminal" evidence="1">
    <location>
        <begin position="281"/>
        <end position="587"/>
    </location>
</feature>
<feature type="binding site" evidence="1">
    <location>
        <begin position="8"/>
        <end position="15"/>
    </location>
    <ligand>
        <name>ATP</name>
        <dbReference type="ChEBI" id="CHEBI:30616"/>
    </ligand>
</feature>
<feature type="binding site" evidence="1">
    <location>
        <position position="805"/>
    </location>
    <ligand>
        <name>[4Fe-4S] cluster</name>
        <dbReference type="ChEBI" id="CHEBI:49883"/>
    </ligand>
</feature>
<feature type="binding site" evidence="1">
    <location>
        <position position="1129"/>
    </location>
    <ligand>
        <name>[4Fe-4S] cluster</name>
        <dbReference type="ChEBI" id="CHEBI:49883"/>
    </ligand>
</feature>
<feature type="binding site" evidence="1">
    <location>
        <position position="1132"/>
    </location>
    <ligand>
        <name>[4Fe-4S] cluster</name>
        <dbReference type="ChEBI" id="CHEBI:49883"/>
    </ligand>
</feature>
<feature type="binding site" evidence="1">
    <location>
        <position position="1138"/>
    </location>
    <ligand>
        <name>[4Fe-4S] cluster</name>
        <dbReference type="ChEBI" id="CHEBI:49883"/>
    </ligand>
</feature>
<reference key="1">
    <citation type="submission" date="2008-10" db="EMBL/GenBank/DDBJ databases">
        <title>Genome sequence of Bacillus cereus AH187.</title>
        <authorList>
            <person name="Dodson R.J."/>
            <person name="Durkin A.S."/>
            <person name="Rosovitz M.J."/>
            <person name="Rasko D.A."/>
            <person name="Kolsto A.B."/>
            <person name="Okstad O.A."/>
            <person name="Ravel J."/>
            <person name="Sutton G."/>
        </authorList>
    </citation>
    <scope>NUCLEOTIDE SEQUENCE [LARGE SCALE GENOMIC DNA]</scope>
    <source>
        <strain>AH187</strain>
    </source>
</reference>